<reference key="1">
    <citation type="journal article" date="2008" name="J. Bacteriol.">
        <title>Insights into plant cell wall degradation from the genome sequence of the soil bacterium Cellvibrio japonicus.</title>
        <authorList>
            <person name="DeBoy R.T."/>
            <person name="Mongodin E.F."/>
            <person name="Fouts D.E."/>
            <person name="Tailford L.E."/>
            <person name="Khouri H."/>
            <person name="Emerson J.B."/>
            <person name="Mohamoud Y."/>
            <person name="Watkins K."/>
            <person name="Henrissat B."/>
            <person name="Gilbert H.J."/>
            <person name="Nelson K.E."/>
        </authorList>
    </citation>
    <scope>NUCLEOTIDE SEQUENCE [LARGE SCALE GENOMIC DNA]</scope>
    <source>
        <strain>Ueda107</strain>
    </source>
</reference>
<feature type="chain" id="PRO_1000125911" description="Small ribosomal subunit protein uS7">
    <location>
        <begin position="1"/>
        <end position="156"/>
    </location>
</feature>
<organism>
    <name type="scientific">Cellvibrio japonicus (strain Ueda107)</name>
    <name type="common">Pseudomonas fluorescens subsp. cellulosa</name>
    <dbReference type="NCBI Taxonomy" id="498211"/>
    <lineage>
        <taxon>Bacteria</taxon>
        <taxon>Pseudomonadati</taxon>
        <taxon>Pseudomonadota</taxon>
        <taxon>Gammaproteobacteria</taxon>
        <taxon>Cellvibrionales</taxon>
        <taxon>Cellvibrionaceae</taxon>
        <taxon>Cellvibrio</taxon>
    </lineage>
</organism>
<name>RS7_CELJU</name>
<protein>
    <recommendedName>
        <fullName evidence="1">Small ribosomal subunit protein uS7</fullName>
    </recommendedName>
    <alternativeName>
        <fullName evidence="2">30S ribosomal protein S7</fullName>
    </alternativeName>
</protein>
<accession>B3PK33</accession>
<comment type="function">
    <text evidence="1">One of the primary rRNA binding proteins, it binds directly to 16S rRNA where it nucleates assembly of the head domain of the 30S subunit. Is located at the subunit interface close to the decoding center, probably blocks exit of the E-site tRNA.</text>
</comment>
<comment type="subunit">
    <text evidence="1">Part of the 30S ribosomal subunit. Contacts proteins S9 and S11.</text>
</comment>
<comment type="similarity">
    <text evidence="1">Belongs to the universal ribosomal protein uS7 family.</text>
</comment>
<sequence>MPRRRVVAKREALPDPKFGDVTLAKFMNHVMISGKKSVAERIVYGALDVVKTKLNRDPLEVFSEALENIAPLVEVKSRRVGGATYQVPVEVRASRRSALAMRWLVDYSRKRSEKSMPQRLAGELIDASQGKGAAVKKREDVHRMAEANKAFSHFRF</sequence>
<keyword id="KW-1185">Reference proteome</keyword>
<keyword id="KW-0687">Ribonucleoprotein</keyword>
<keyword id="KW-0689">Ribosomal protein</keyword>
<keyword id="KW-0694">RNA-binding</keyword>
<keyword id="KW-0699">rRNA-binding</keyword>
<keyword id="KW-0820">tRNA-binding</keyword>
<gene>
    <name evidence="1" type="primary">rpsG</name>
    <name type="ordered locus">CJA_0695</name>
</gene>
<dbReference type="EMBL" id="CP000934">
    <property type="protein sequence ID" value="ACE83720.1"/>
    <property type="molecule type" value="Genomic_DNA"/>
</dbReference>
<dbReference type="RefSeq" id="WP_012486360.1">
    <property type="nucleotide sequence ID" value="NC_010995.1"/>
</dbReference>
<dbReference type="SMR" id="B3PK33"/>
<dbReference type="STRING" id="498211.CJA_0695"/>
<dbReference type="KEGG" id="cja:CJA_0695"/>
<dbReference type="eggNOG" id="COG0049">
    <property type="taxonomic scope" value="Bacteria"/>
</dbReference>
<dbReference type="HOGENOM" id="CLU_072226_1_1_6"/>
<dbReference type="OrthoDB" id="9807653at2"/>
<dbReference type="Proteomes" id="UP000001036">
    <property type="component" value="Chromosome"/>
</dbReference>
<dbReference type="GO" id="GO:0015935">
    <property type="term" value="C:small ribosomal subunit"/>
    <property type="evidence" value="ECO:0007669"/>
    <property type="project" value="InterPro"/>
</dbReference>
<dbReference type="GO" id="GO:0019843">
    <property type="term" value="F:rRNA binding"/>
    <property type="evidence" value="ECO:0007669"/>
    <property type="project" value="UniProtKB-UniRule"/>
</dbReference>
<dbReference type="GO" id="GO:0003735">
    <property type="term" value="F:structural constituent of ribosome"/>
    <property type="evidence" value="ECO:0007669"/>
    <property type="project" value="InterPro"/>
</dbReference>
<dbReference type="GO" id="GO:0000049">
    <property type="term" value="F:tRNA binding"/>
    <property type="evidence" value="ECO:0007669"/>
    <property type="project" value="UniProtKB-UniRule"/>
</dbReference>
<dbReference type="GO" id="GO:0006412">
    <property type="term" value="P:translation"/>
    <property type="evidence" value="ECO:0007669"/>
    <property type="project" value="UniProtKB-UniRule"/>
</dbReference>
<dbReference type="CDD" id="cd14869">
    <property type="entry name" value="uS7_Bacteria"/>
    <property type="match status" value="1"/>
</dbReference>
<dbReference type="FunFam" id="1.10.455.10:FF:000001">
    <property type="entry name" value="30S ribosomal protein S7"/>
    <property type="match status" value="1"/>
</dbReference>
<dbReference type="Gene3D" id="1.10.455.10">
    <property type="entry name" value="Ribosomal protein S7 domain"/>
    <property type="match status" value="1"/>
</dbReference>
<dbReference type="HAMAP" id="MF_00480_B">
    <property type="entry name" value="Ribosomal_uS7_B"/>
    <property type="match status" value="1"/>
</dbReference>
<dbReference type="InterPro" id="IPR000235">
    <property type="entry name" value="Ribosomal_uS7"/>
</dbReference>
<dbReference type="InterPro" id="IPR005717">
    <property type="entry name" value="Ribosomal_uS7_bac/org-type"/>
</dbReference>
<dbReference type="InterPro" id="IPR020606">
    <property type="entry name" value="Ribosomal_uS7_CS"/>
</dbReference>
<dbReference type="InterPro" id="IPR023798">
    <property type="entry name" value="Ribosomal_uS7_dom"/>
</dbReference>
<dbReference type="InterPro" id="IPR036823">
    <property type="entry name" value="Ribosomal_uS7_dom_sf"/>
</dbReference>
<dbReference type="NCBIfam" id="TIGR01029">
    <property type="entry name" value="rpsG_bact"/>
    <property type="match status" value="1"/>
</dbReference>
<dbReference type="PANTHER" id="PTHR11205">
    <property type="entry name" value="RIBOSOMAL PROTEIN S7"/>
    <property type="match status" value="1"/>
</dbReference>
<dbReference type="Pfam" id="PF00177">
    <property type="entry name" value="Ribosomal_S7"/>
    <property type="match status" value="1"/>
</dbReference>
<dbReference type="PIRSF" id="PIRSF002122">
    <property type="entry name" value="RPS7p_RPS7a_RPS5e_RPS7o"/>
    <property type="match status" value="1"/>
</dbReference>
<dbReference type="SUPFAM" id="SSF47973">
    <property type="entry name" value="Ribosomal protein S7"/>
    <property type="match status" value="1"/>
</dbReference>
<dbReference type="PROSITE" id="PS00052">
    <property type="entry name" value="RIBOSOMAL_S7"/>
    <property type="match status" value="1"/>
</dbReference>
<proteinExistence type="inferred from homology"/>
<evidence type="ECO:0000255" key="1">
    <source>
        <dbReference type="HAMAP-Rule" id="MF_00480"/>
    </source>
</evidence>
<evidence type="ECO:0000305" key="2"/>